<comment type="function">
    <text evidence="1">Effector proteins function to alter host cell physiology and promote bacterial survival in host tissues. This protease targets the host cell ubiquitin pathway by acting as a deubiquitinase in infected host cells (By similarity).</text>
</comment>
<comment type="subcellular location">
    <subcellularLocation>
        <location evidence="1">Secreted</location>
    </subcellularLocation>
    <subcellularLocation>
        <location evidence="1">Host cytoplasm</location>
    </subcellularLocation>
    <text evidence="1">Secreted via type III secretion system 2 (SPI-2 T3SS), and delivered into the host cytoplasm. In phagocytic cells localizes to the Salmonella-containing vacuole (SCV). In epithelial cells localizes to the Salmonella-containing vacuole (SCV) and to the Salmonella-induced filaments (Sifs), which are tubular membrane extensions from the SCV that are formed at late stages of infection (By similarity).</text>
</comment>
<comment type="similarity">
    <text evidence="2">Belongs to the peptidase C79 family.</text>
</comment>
<feature type="chain" id="PRO_0000323570" description="Deubiquitinase SseL">
    <location>
        <begin position="1"/>
        <end position="340"/>
    </location>
</feature>
<feature type="active site" evidence="1">
    <location>
        <position position="222"/>
    </location>
</feature>
<feature type="active site" description="Nucleophile" evidence="1">
    <location>
        <position position="284"/>
    </location>
</feature>
<sequence length="340" mass="38153">MNICVNSLYRLSTPQFQNLYSEEVSDEGLALLIREVENGDQNCIDLLCNLALRNDDLGHKVEKILFDLFSGKKHGSPDIDKKINQACLMLYQTANNDIAKNNTDFKKLHIPSRLLYMAGSATPDFSKKLEIAHKILGDQIAQTEEEQVGVENLWCPARMVSSDELSRATQGMTQGLSLSVNYPIGLIHPTTGENVLSAQLHEKVAQSGLSDNEVFLINTESHWIFCLFYKIAEKIKCLIFNTHHDLNQNTKQEIRAAAKIAGASEEGDVNFIEIDLQNNVPNGCGLFCFQALQLLSATGQNDPVAVLREYSENFLRLSVEEQTLFNTETRRKIHEYSLTS</sequence>
<keyword id="KW-1035">Host cytoplasm</keyword>
<keyword id="KW-0378">Hydrolase</keyword>
<keyword id="KW-0645">Protease</keyword>
<keyword id="KW-1185">Reference proteome</keyword>
<keyword id="KW-0964">Secreted</keyword>
<keyword id="KW-0788">Thiol protease</keyword>
<keyword id="KW-0843">Virulence</keyword>
<organism>
    <name type="scientific">Salmonella arizonae (strain ATCC BAA-731 / CDC346-86 / RSK2980)</name>
    <dbReference type="NCBI Taxonomy" id="41514"/>
    <lineage>
        <taxon>Bacteria</taxon>
        <taxon>Pseudomonadati</taxon>
        <taxon>Pseudomonadota</taxon>
        <taxon>Gammaproteobacteria</taxon>
        <taxon>Enterobacterales</taxon>
        <taxon>Enterobacteriaceae</taxon>
        <taxon>Salmonella</taxon>
    </lineage>
</organism>
<gene>
    <name type="primary">sseL</name>
    <name type="ordered locus">SARI_00605</name>
</gene>
<dbReference type="EC" id="3.4.22.-"/>
<dbReference type="EMBL" id="CP000880">
    <property type="protein sequence ID" value="ABX20531.1"/>
    <property type="molecule type" value="Genomic_DNA"/>
</dbReference>
<dbReference type="SMR" id="A9MJD1"/>
<dbReference type="STRING" id="41514.SARI_00605"/>
<dbReference type="KEGG" id="ses:SARI_00605"/>
<dbReference type="HOGENOM" id="CLU_069513_0_0_6"/>
<dbReference type="Proteomes" id="UP000002084">
    <property type="component" value="Chromosome"/>
</dbReference>
<dbReference type="GO" id="GO:0005576">
    <property type="term" value="C:extracellular region"/>
    <property type="evidence" value="ECO:0007669"/>
    <property type="project" value="UniProtKB-SubCell"/>
</dbReference>
<dbReference type="GO" id="GO:0030430">
    <property type="term" value="C:host cell cytoplasm"/>
    <property type="evidence" value="ECO:0007669"/>
    <property type="project" value="UniProtKB-SubCell"/>
</dbReference>
<dbReference type="GO" id="GO:0008234">
    <property type="term" value="F:cysteine-type peptidase activity"/>
    <property type="evidence" value="ECO:0007669"/>
    <property type="project" value="UniProtKB-KW"/>
</dbReference>
<dbReference type="GO" id="GO:0006508">
    <property type="term" value="P:proteolysis"/>
    <property type="evidence" value="ECO:0007669"/>
    <property type="project" value="UniProtKB-KW"/>
</dbReference>
<dbReference type="InterPro" id="IPR054329">
    <property type="entry name" value="ElaD/SseL-like_N"/>
</dbReference>
<dbReference type="InterPro" id="IPR054328">
    <property type="entry name" value="SseL-like_C"/>
</dbReference>
<dbReference type="NCBIfam" id="NF008812">
    <property type="entry name" value="PRK11836.1"/>
    <property type="match status" value="1"/>
</dbReference>
<dbReference type="NCBIfam" id="NF011421">
    <property type="entry name" value="PRK14848.1"/>
    <property type="match status" value="1"/>
</dbReference>
<dbReference type="Pfam" id="PF22102">
    <property type="entry name" value="ElaD-SseL-like_C"/>
    <property type="match status" value="1"/>
</dbReference>
<dbReference type="Pfam" id="PF22103">
    <property type="entry name" value="ElaD_SseL-like_N"/>
    <property type="match status" value="1"/>
</dbReference>
<evidence type="ECO:0000250" key="1"/>
<evidence type="ECO:0000305" key="2"/>
<name>SSEL_SALAR</name>
<protein>
    <recommendedName>
        <fullName>Deubiquitinase SseL</fullName>
        <ecNumber>3.4.22.-</ecNumber>
    </recommendedName>
    <alternativeName>
        <fullName>Deubiquitinating enzyme</fullName>
        <shortName>DUB</shortName>
    </alternativeName>
    <alternativeName>
        <fullName>Deubiquitinating protease</fullName>
    </alternativeName>
    <alternativeName>
        <fullName>Salmonella secreted effector L</fullName>
    </alternativeName>
</protein>
<accession>A9MJD1</accession>
<reference key="1">
    <citation type="submission" date="2007-11" db="EMBL/GenBank/DDBJ databases">
        <authorList>
            <consortium name="The Salmonella enterica serovar Arizonae Genome Sequencing Project"/>
            <person name="McClelland M."/>
            <person name="Sanderson E.K."/>
            <person name="Porwollik S."/>
            <person name="Spieth J."/>
            <person name="Clifton W.S."/>
            <person name="Fulton R."/>
            <person name="Chunyan W."/>
            <person name="Wollam A."/>
            <person name="Shah N."/>
            <person name="Pepin K."/>
            <person name="Bhonagiri V."/>
            <person name="Nash W."/>
            <person name="Johnson M."/>
            <person name="Thiruvilangam P."/>
            <person name="Wilson R."/>
        </authorList>
    </citation>
    <scope>NUCLEOTIDE SEQUENCE [LARGE SCALE GENOMIC DNA]</scope>
    <source>
        <strain>ATCC BAA-731 / CDC346-86 / RSK2980</strain>
    </source>
</reference>
<proteinExistence type="inferred from homology"/>